<organism>
    <name type="scientific">Haemophilus influenzae (strain ATCC 51907 / DSM 11121 / KW20 / Rd)</name>
    <dbReference type="NCBI Taxonomy" id="71421"/>
    <lineage>
        <taxon>Bacteria</taxon>
        <taxon>Pseudomonadati</taxon>
        <taxon>Pseudomonadota</taxon>
        <taxon>Gammaproteobacteria</taxon>
        <taxon>Pasteurellales</taxon>
        <taxon>Pasteurellaceae</taxon>
        <taxon>Haemophilus</taxon>
    </lineage>
</organism>
<gene>
    <name type="ordered locus">HI_0020</name>
</gene>
<proteinExistence type="inferred from homology"/>
<dbReference type="EMBL" id="L42023">
    <property type="protein sequence ID" value="AAC21698.1"/>
    <property type="molecule type" value="Genomic_DNA"/>
</dbReference>
<dbReference type="PIR" id="B64043">
    <property type="entry name" value="B64043"/>
</dbReference>
<dbReference type="RefSeq" id="NP_438193.1">
    <property type="nucleotide sequence ID" value="NC_000907.1"/>
</dbReference>
<dbReference type="SMR" id="Q57048"/>
<dbReference type="STRING" id="71421.HI_0020"/>
<dbReference type="EnsemblBacteria" id="AAC21698">
    <property type="protein sequence ID" value="AAC21698"/>
    <property type="gene ID" value="HI_0020"/>
</dbReference>
<dbReference type="KEGG" id="hin:HI_0020"/>
<dbReference type="PATRIC" id="fig|71421.8.peg.20"/>
<dbReference type="eggNOG" id="COG0471">
    <property type="taxonomic scope" value="Bacteria"/>
</dbReference>
<dbReference type="HOGENOM" id="CLU_005170_7_3_6"/>
<dbReference type="OrthoDB" id="3170849at2"/>
<dbReference type="PhylomeDB" id="Q57048"/>
<dbReference type="BioCyc" id="HINF71421:G1GJ1-20-MONOMER"/>
<dbReference type="Proteomes" id="UP000000579">
    <property type="component" value="Chromosome"/>
</dbReference>
<dbReference type="GO" id="GO:0005886">
    <property type="term" value="C:plasma membrane"/>
    <property type="evidence" value="ECO:0000318"/>
    <property type="project" value="GO_Central"/>
</dbReference>
<dbReference type="GO" id="GO:0022857">
    <property type="term" value="F:transmembrane transporter activity"/>
    <property type="evidence" value="ECO:0007669"/>
    <property type="project" value="InterPro"/>
</dbReference>
<dbReference type="InterPro" id="IPR030676">
    <property type="entry name" value="CitT-rel"/>
</dbReference>
<dbReference type="InterPro" id="IPR001898">
    <property type="entry name" value="SLC13A/DASS"/>
</dbReference>
<dbReference type="NCBIfam" id="TIGR00785">
    <property type="entry name" value="dass"/>
    <property type="match status" value="1"/>
</dbReference>
<dbReference type="PANTHER" id="PTHR42826">
    <property type="entry name" value="DICARBOXYLATE TRANSPORTER 2.1, CHLOROPLASTIC"/>
    <property type="match status" value="1"/>
</dbReference>
<dbReference type="Pfam" id="PF00939">
    <property type="entry name" value="Na_sulph_symp"/>
    <property type="match status" value="1"/>
</dbReference>
<dbReference type="PIRSF" id="PIRSF002457">
    <property type="entry name" value="DASS"/>
    <property type="match status" value="1"/>
</dbReference>
<feature type="chain" id="PRO_0000172524" description="Uncharacterized transporter HI_0020">
    <location>
        <begin position="1"/>
        <end position="479"/>
    </location>
</feature>
<feature type="transmembrane region" description="Helical" evidence="1">
    <location>
        <begin position="11"/>
        <end position="31"/>
    </location>
</feature>
<feature type="transmembrane region" description="Helical" evidence="1">
    <location>
        <begin position="43"/>
        <end position="63"/>
    </location>
</feature>
<feature type="transmembrane region" description="Helical" evidence="1">
    <location>
        <begin position="90"/>
        <end position="110"/>
    </location>
</feature>
<feature type="transmembrane region" description="Helical" evidence="1">
    <location>
        <begin position="151"/>
        <end position="171"/>
    </location>
</feature>
<feature type="transmembrane region" description="Helical" evidence="1">
    <location>
        <begin position="195"/>
        <end position="215"/>
    </location>
</feature>
<feature type="transmembrane region" description="Helical" evidence="1">
    <location>
        <begin position="223"/>
        <end position="243"/>
    </location>
</feature>
<feature type="transmembrane region" description="Helical" evidence="1">
    <location>
        <begin position="274"/>
        <end position="294"/>
    </location>
</feature>
<feature type="transmembrane region" description="Helical" evidence="1">
    <location>
        <begin position="295"/>
        <end position="315"/>
    </location>
</feature>
<feature type="transmembrane region" description="Helical" evidence="1">
    <location>
        <begin position="328"/>
        <end position="348"/>
    </location>
</feature>
<feature type="transmembrane region" description="Helical" evidence="1">
    <location>
        <begin position="447"/>
        <end position="467"/>
    </location>
</feature>
<sequence>MALSKNTKLVILMAIPLITFLLPAPDGLSLIAWRLLGVYIATIVGLVLKPYGEPVILLAAIAVSGVIIGNTEGAKELVKVGNMLDGYKSGTTWLIFTAFTLSSAFVITGLGKRIAYHMIGAMGSTTLRLGYVTMFLDLLLSPATPSNTARSGGIIFPIINSVVVALGSDPEKSPKKAGRYLMMNVYMVVKTTSYIFLTAMAPNALALSLMAPILGFETTWIKWFLAASVPGLLCLFLIPLICYWVSPPELKKVDNKAIAKKGLEELGPMSFREKALSVLFVIALFGWIFSNSLHINATIVAIIVMVLCIVLSIVTWDDILKSKGAWNTLVWYGGIIGMSGLLEKSGFFKWLANTLSTILQFEGHGMMALIVILTLSVSVRYLFASGGAYVAAMVPVFATVGHVTGAPTELLALGLVFANSYGGSVTHYGGGPGPIAFGAGYNDIKSWWITGAIIAFGSLIIHLTIGMAWWKLLMSLGWL</sequence>
<keyword id="KW-0997">Cell inner membrane</keyword>
<keyword id="KW-1003">Cell membrane</keyword>
<keyword id="KW-0472">Membrane</keyword>
<keyword id="KW-1185">Reference proteome</keyword>
<keyword id="KW-0812">Transmembrane</keyword>
<keyword id="KW-1133">Transmembrane helix</keyword>
<keyword id="KW-0813">Transport</keyword>
<comment type="subcellular location">
    <subcellularLocation>
        <location evidence="2">Cell inner membrane</location>
        <topology evidence="2">Multi-pass membrane protein</topology>
    </subcellularLocation>
</comment>
<comment type="similarity">
    <text evidence="2">Belongs to the SLC13A/DASS transporter (TC 2.A.47) family. DIT1 subfamily.</text>
</comment>
<reference key="1">
    <citation type="journal article" date="1995" name="Science">
        <title>Whole-genome random sequencing and assembly of Haemophilus influenzae Rd.</title>
        <authorList>
            <person name="Fleischmann R.D."/>
            <person name="Adams M.D."/>
            <person name="White O."/>
            <person name="Clayton R.A."/>
            <person name="Kirkness E.F."/>
            <person name="Kerlavage A.R."/>
            <person name="Bult C.J."/>
            <person name="Tomb J.-F."/>
            <person name="Dougherty B.A."/>
            <person name="Merrick J.M."/>
            <person name="McKenney K."/>
            <person name="Sutton G.G."/>
            <person name="FitzHugh W."/>
            <person name="Fields C.A."/>
            <person name="Gocayne J.D."/>
            <person name="Scott J.D."/>
            <person name="Shirley R."/>
            <person name="Liu L.-I."/>
            <person name="Glodek A."/>
            <person name="Kelley J.M."/>
            <person name="Weidman J.F."/>
            <person name="Phillips C.A."/>
            <person name="Spriggs T."/>
            <person name="Hedblom E."/>
            <person name="Cotton M.D."/>
            <person name="Utterback T.R."/>
            <person name="Hanna M.C."/>
            <person name="Nguyen D.T."/>
            <person name="Saudek D.M."/>
            <person name="Brandon R.C."/>
            <person name="Fine L.D."/>
            <person name="Fritchman J.L."/>
            <person name="Fuhrmann J.L."/>
            <person name="Geoghagen N.S.M."/>
            <person name="Gnehm C.L."/>
            <person name="McDonald L.A."/>
            <person name="Small K.V."/>
            <person name="Fraser C.M."/>
            <person name="Smith H.O."/>
            <person name="Venter J.C."/>
        </authorList>
    </citation>
    <scope>NUCLEOTIDE SEQUENCE [LARGE SCALE GENOMIC DNA]</scope>
    <source>
        <strain>ATCC 51907 / DSM 11121 / KW20 / Rd</strain>
    </source>
</reference>
<name>Y020_HAEIN</name>
<accession>Q57048</accession>
<accession>O05004</accession>
<protein>
    <recommendedName>
        <fullName>Uncharacterized transporter HI_0020</fullName>
    </recommendedName>
</protein>
<evidence type="ECO:0000255" key="1"/>
<evidence type="ECO:0000305" key="2"/>